<dbReference type="EC" id="3.5.4.19"/>
<dbReference type="EC" id="3.6.1.31"/>
<dbReference type="EMBL" id="X71970">
    <property type="protein sequence ID" value="CAA50784.1"/>
    <property type="molecule type" value="Genomic_DNA"/>
</dbReference>
<dbReference type="EMBL" id="AE005674">
    <property type="protein sequence ID" value="AAN43628.1"/>
    <property type="molecule type" value="Genomic_DNA"/>
</dbReference>
<dbReference type="EMBL" id="AE014073">
    <property type="protein sequence ID" value="AAP17456.1"/>
    <property type="molecule type" value="Genomic_DNA"/>
</dbReference>
<dbReference type="RefSeq" id="NP_707921.1">
    <property type="nucleotide sequence ID" value="NC_004337.2"/>
</dbReference>
<dbReference type="RefSeq" id="WP_000954863.1">
    <property type="nucleotide sequence ID" value="NZ_WPGW01000112.1"/>
</dbReference>
<dbReference type="PDB" id="6J22">
    <property type="method" value="X-ray"/>
    <property type="resolution" value="2.20 A"/>
    <property type="chains" value="A/B=2-203"/>
</dbReference>
<dbReference type="PDB" id="6J2L">
    <property type="method" value="X-ray"/>
    <property type="resolution" value="2.17 A"/>
    <property type="chains" value="A/B=2-203"/>
</dbReference>
<dbReference type="PDBsum" id="6J22"/>
<dbReference type="PDBsum" id="6J2L"/>
<dbReference type="SMR" id="P37793"/>
<dbReference type="STRING" id="198214.SF2088"/>
<dbReference type="PaxDb" id="198214-SF2088"/>
<dbReference type="GeneID" id="1025295"/>
<dbReference type="KEGG" id="sfl:SF2088"/>
<dbReference type="KEGG" id="sfx:S2209"/>
<dbReference type="PATRIC" id="fig|198214.7.peg.2497"/>
<dbReference type="HOGENOM" id="CLU_048577_3_1_6"/>
<dbReference type="UniPathway" id="UPA00031">
    <property type="reaction ID" value="UER00007"/>
</dbReference>
<dbReference type="UniPathway" id="UPA00031">
    <property type="reaction ID" value="UER00008"/>
</dbReference>
<dbReference type="Proteomes" id="UP000001006">
    <property type="component" value="Chromosome"/>
</dbReference>
<dbReference type="Proteomes" id="UP000002673">
    <property type="component" value="Chromosome"/>
</dbReference>
<dbReference type="GO" id="GO:0005737">
    <property type="term" value="C:cytoplasm"/>
    <property type="evidence" value="ECO:0007669"/>
    <property type="project" value="UniProtKB-SubCell"/>
</dbReference>
<dbReference type="GO" id="GO:0005524">
    <property type="term" value="F:ATP binding"/>
    <property type="evidence" value="ECO:0007669"/>
    <property type="project" value="UniProtKB-KW"/>
</dbReference>
<dbReference type="GO" id="GO:0004635">
    <property type="term" value="F:phosphoribosyl-AMP cyclohydrolase activity"/>
    <property type="evidence" value="ECO:0007669"/>
    <property type="project" value="UniProtKB-UniRule"/>
</dbReference>
<dbReference type="GO" id="GO:0004636">
    <property type="term" value="F:phosphoribosyl-ATP diphosphatase activity"/>
    <property type="evidence" value="ECO:0007669"/>
    <property type="project" value="UniProtKB-UniRule"/>
</dbReference>
<dbReference type="GO" id="GO:0000105">
    <property type="term" value="P:L-histidine biosynthetic process"/>
    <property type="evidence" value="ECO:0007669"/>
    <property type="project" value="UniProtKB-UniRule"/>
</dbReference>
<dbReference type="CDD" id="cd11534">
    <property type="entry name" value="NTP-PPase_HisIE_like"/>
    <property type="match status" value="1"/>
</dbReference>
<dbReference type="FunFam" id="1.10.287.1080:FF:000002">
    <property type="entry name" value="Histidine biosynthesis bifunctional protein HisIE"/>
    <property type="match status" value="1"/>
</dbReference>
<dbReference type="FunFam" id="3.10.20.810:FF:000001">
    <property type="entry name" value="Histidine biosynthesis bifunctional protein HisIE"/>
    <property type="match status" value="1"/>
</dbReference>
<dbReference type="Gene3D" id="1.10.287.1080">
    <property type="entry name" value="MazG-like"/>
    <property type="match status" value="1"/>
</dbReference>
<dbReference type="Gene3D" id="3.10.20.810">
    <property type="entry name" value="Phosphoribosyl-AMP cyclohydrolase"/>
    <property type="match status" value="1"/>
</dbReference>
<dbReference type="HAMAP" id="MF_01020">
    <property type="entry name" value="HisE"/>
    <property type="match status" value="1"/>
</dbReference>
<dbReference type="HAMAP" id="MF_01019">
    <property type="entry name" value="HisIE"/>
    <property type="match status" value="1"/>
</dbReference>
<dbReference type="InterPro" id="IPR023019">
    <property type="entry name" value="His_synth_HisIE"/>
</dbReference>
<dbReference type="InterPro" id="IPR008179">
    <property type="entry name" value="HisE"/>
</dbReference>
<dbReference type="InterPro" id="IPR021130">
    <property type="entry name" value="PRib-ATP_PPHydrolase-like"/>
</dbReference>
<dbReference type="InterPro" id="IPR002496">
    <property type="entry name" value="PRib_AMP_CycHydrolase_dom"/>
</dbReference>
<dbReference type="InterPro" id="IPR038019">
    <property type="entry name" value="PRib_AMP_CycHydrolase_sf"/>
</dbReference>
<dbReference type="NCBIfam" id="TIGR03188">
    <property type="entry name" value="histidine_hisI"/>
    <property type="match status" value="1"/>
</dbReference>
<dbReference type="NCBIfam" id="NF000768">
    <property type="entry name" value="PRK00051.1"/>
    <property type="match status" value="1"/>
</dbReference>
<dbReference type="NCBIfam" id="NF002747">
    <property type="entry name" value="PRK02759.1"/>
    <property type="match status" value="1"/>
</dbReference>
<dbReference type="PANTHER" id="PTHR42945">
    <property type="entry name" value="HISTIDINE BIOSYNTHESIS BIFUNCTIONAL PROTEIN"/>
    <property type="match status" value="1"/>
</dbReference>
<dbReference type="PANTHER" id="PTHR42945:SF9">
    <property type="entry name" value="HISTIDINE BIOSYNTHESIS BIFUNCTIONAL PROTEIN HISIE"/>
    <property type="match status" value="1"/>
</dbReference>
<dbReference type="Pfam" id="PF01502">
    <property type="entry name" value="PRA-CH"/>
    <property type="match status" value="1"/>
</dbReference>
<dbReference type="Pfam" id="PF01503">
    <property type="entry name" value="PRA-PH"/>
    <property type="match status" value="1"/>
</dbReference>
<dbReference type="SUPFAM" id="SSF101386">
    <property type="entry name" value="all-alpha NTP pyrophosphatases"/>
    <property type="match status" value="1"/>
</dbReference>
<dbReference type="SUPFAM" id="SSF141734">
    <property type="entry name" value="HisI-like"/>
    <property type="match status" value="1"/>
</dbReference>
<feature type="chain" id="PRO_0000136429" description="Histidine biosynthesis bifunctional protein HisIE">
    <location>
        <begin position="1"/>
        <end position="203"/>
    </location>
</feature>
<feature type="region of interest" description="Phosphoribosyl-AMP cyclohydrolase">
    <location>
        <begin position="1"/>
        <end position="114"/>
    </location>
</feature>
<feature type="region of interest" description="Phosphoribosyl-ATP pyrophosphohydrolase">
    <location>
        <begin position="115"/>
        <end position="203"/>
    </location>
</feature>
<feature type="helix" evidence="4">
    <location>
        <begin position="4"/>
        <end position="9"/>
    </location>
</feature>
<feature type="turn" evidence="4">
    <location>
        <begin position="12"/>
        <end position="17"/>
    </location>
</feature>
<feature type="strand" evidence="4">
    <location>
        <begin position="19"/>
        <end position="25"/>
    </location>
</feature>
<feature type="turn" evidence="4">
    <location>
        <begin position="26"/>
        <end position="28"/>
    </location>
</feature>
<feature type="strand" evidence="4">
    <location>
        <begin position="31"/>
        <end position="37"/>
    </location>
</feature>
<feature type="helix" evidence="4">
    <location>
        <begin position="39"/>
        <end position="48"/>
    </location>
</feature>
<feature type="strand" evidence="4">
    <location>
        <begin position="52"/>
        <end position="55"/>
    </location>
</feature>
<feature type="turn" evidence="4">
    <location>
        <begin position="56"/>
        <end position="59"/>
    </location>
</feature>
<feature type="strand" evidence="4">
    <location>
        <begin position="60"/>
        <end position="63"/>
    </location>
</feature>
<feature type="turn" evidence="4">
    <location>
        <begin position="64"/>
        <end position="68"/>
    </location>
</feature>
<feature type="strand" evidence="4">
    <location>
        <begin position="71"/>
        <end position="79"/>
    </location>
</feature>
<feature type="strand" evidence="4">
    <location>
        <begin position="86"/>
        <end position="94"/>
    </location>
</feature>
<feature type="strand" evidence="4">
    <location>
        <begin position="100"/>
        <end position="102"/>
    </location>
</feature>
<feature type="turn" evidence="4">
    <location>
        <begin position="104"/>
        <end position="107"/>
    </location>
</feature>
<feature type="helix" evidence="4">
    <location>
        <begin position="113"/>
        <end position="124"/>
    </location>
</feature>
<feature type="turn" evidence="3">
    <location>
        <begin position="125"/>
        <end position="127"/>
    </location>
</feature>
<feature type="helix" evidence="4">
    <location>
        <begin position="134"/>
        <end position="141"/>
    </location>
</feature>
<feature type="helix" evidence="4">
    <location>
        <begin position="143"/>
        <end position="162"/>
    </location>
</feature>
<feature type="helix" evidence="4">
    <location>
        <begin position="166"/>
        <end position="186"/>
    </location>
</feature>
<feature type="helix" evidence="4">
    <location>
        <begin position="191"/>
        <end position="200"/>
    </location>
</feature>
<name>HIS2_SHIFL</name>
<gene>
    <name type="primary">hisI</name>
    <name type="synonym">hisIE</name>
    <name type="ordered locus">SF2088</name>
    <name type="ordered locus">S2209</name>
</gene>
<protein>
    <recommendedName>
        <fullName>Histidine biosynthesis bifunctional protein HisIE</fullName>
    </recommendedName>
    <domain>
        <recommendedName>
            <fullName>Phosphoribosyl-AMP cyclohydrolase</fullName>
            <shortName>PRA-CH</shortName>
            <ecNumber>3.5.4.19</ecNumber>
        </recommendedName>
    </domain>
    <domain>
        <recommendedName>
            <fullName>Phosphoribosyl-ATP pyrophosphatase</fullName>
            <shortName>PRA-PH</shortName>
            <ecNumber>3.6.1.31</ecNumber>
        </recommendedName>
    </domain>
</protein>
<sequence length="203" mass="22882">MLTEQQRRELDWEKTDGLMPVIVQHAVSGEVLMLGYMNPEALDKTIESGKVTFFSRTKQRLWIKGETSGNFLNVVSIAPDCDNDTLLVLANPIGPTCHKGTSSCFGNTAHQWLFLYQLEQLLAERKYADPETSYTAKLYASGTKRIAQKVGEEGVETALAATVHDRFELTNEASDLMYHLLVLLQDQDLDLTTVIENLHKRHQ</sequence>
<reference key="1">
    <citation type="journal article" date="1994" name="J. Bacteriol.">
        <title>Characterization of the rfc region of Shigella flexneri.</title>
        <authorList>
            <person name="Morona R."/>
            <person name="Mavris M."/>
            <person name="Fallarino A."/>
            <person name="Manning P.A."/>
        </authorList>
    </citation>
    <scope>NUCLEOTIDE SEQUENCE [GENOMIC DNA]</scope>
    <source>
        <strain>PE577 / Serotype 2a</strain>
    </source>
</reference>
<reference key="2">
    <citation type="journal article" date="2002" name="Nucleic Acids Res.">
        <title>Genome sequence of Shigella flexneri 2a: insights into pathogenicity through comparison with genomes of Escherichia coli K12 and O157.</title>
        <authorList>
            <person name="Jin Q."/>
            <person name="Yuan Z."/>
            <person name="Xu J."/>
            <person name="Wang Y."/>
            <person name="Shen Y."/>
            <person name="Lu W."/>
            <person name="Wang J."/>
            <person name="Liu H."/>
            <person name="Yang J."/>
            <person name="Yang F."/>
            <person name="Zhang X."/>
            <person name="Zhang J."/>
            <person name="Yang G."/>
            <person name="Wu H."/>
            <person name="Qu D."/>
            <person name="Dong J."/>
            <person name="Sun L."/>
            <person name="Xue Y."/>
            <person name="Zhao A."/>
            <person name="Gao Y."/>
            <person name="Zhu J."/>
            <person name="Kan B."/>
            <person name="Ding K."/>
            <person name="Chen S."/>
            <person name="Cheng H."/>
            <person name="Yao Z."/>
            <person name="He B."/>
            <person name="Chen R."/>
            <person name="Ma D."/>
            <person name="Qiang B."/>
            <person name="Wen Y."/>
            <person name="Hou Y."/>
            <person name="Yu J."/>
        </authorList>
    </citation>
    <scope>NUCLEOTIDE SEQUENCE [LARGE SCALE GENOMIC DNA]</scope>
    <source>
        <strain>301 / Serotype 2a</strain>
    </source>
</reference>
<reference key="3">
    <citation type="journal article" date="2003" name="Infect. Immun.">
        <title>Complete genome sequence and comparative genomics of Shigella flexneri serotype 2a strain 2457T.</title>
        <authorList>
            <person name="Wei J."/>
            <person name="Goldberg M.B."/>
            <person name="Burland V."/>
            <person name="Venkatesan M.M."/>
            <person name="Deng W."/>
            <person name="Fournier G."/>
            <person name="Mayhew G.F."/>
            <person name="Plunkett G. III"/>
            <person name="Rose D.J."/>
            <person name="Darling A."/>
            <person name="Mau B."/>
            <person name="Perna N.T."/>
            <person name="Payne S.M."/>
            <person name="Runyen-Janecky L.J."/>
            <person name="Zhou S."/>
            <person name="Schwartz D.C."/>
            <person name="Blattner F.R."/>
        </authorList>
    </citation>
    <scope>NUCLEOTIDE SEQUENCE [LARGE SCALE GENOMIC DNA]</scope>
    <source>
        <strain>ATCC 700930 / 2457T / Serotype 2a</strain>
    </source>
</reference>
<keyword id="KW-0002">3D-structure</keyword>
<keyword id="KW-0028">Amino-acid biosynthesis</keyword>
<keyword id="KW-0067">ATP-binding</keyword>
<keyword id="KW-0963">Cytoplasm</keyword>
<keyword id="KW-0368">Histidine biosynthesis</keyword>
<keyword id="KW-0378">Hydrolase</keyword>
<keyword id="KW-0511">Multifunctional enzyme</keyword>
<keyword id="KW-0547">Nucleotide-binding</keyword>
<keyword id="KW-1185">Reference proteome</keyword>
<evidence type="ECO:0000250" key="1"/>
<evidence type="ECO:0000305" key="2"/>
<evidence type="ECO:0007829" key="3">
    <source>
        <dbReference type="PDB" id="6J22"/>
    </source>
</evidence>
<evidence type="ECO:0007829" key="4">
    <source>
        <dbReference type="PDB" id="6J2L"/>
    </source>
</evidence>
<organism>
    <name type="scientific">Shigella flexneri</name>
    <dbReference type="NCBI Taxonomy" id="623"/>
    <lineage>
        <taxon>Bacteria</taxon>
        <taxon>Pseudomonadati</taxon>
        <taxon>Pseudomonadota</taxon>
        <taxon>Gammaproteobacteria</taxon>
        <taxon>Enterobacterales</taxon>
        <taxon>Enterobacteriaceae</taxon>
        <taxon>Shigella</taxon>
    </lineage>
</organism>
<accession>P37793</accession>
<proteinExistence type="evidence at protein level"/>
<comment type="catalytic activity">
    <reaction>
        <text>1-(5-phospho-beta-D-ribosyl)-ATP + H2O = 1-(5-phospho-beta-D-ribosyl)-5'-AMP + diphosphate + H(+)</text>
        <dbReference type="Rhea" id="RHEA:22828"/>
        <dbReference type="ChEBI" id="CHEBI:15377"/>
        <dbReference type="ChEBI" id="CHEBI:15378"/>
        <dbReference type="ChEBI" id="CHEBI:33019"/>
        <dbReference type="ChEBI" id="CHEBI:59457"/>
        <dbReference type="ChEBI" id="CHEBI:73183"/>
        <dbReference type="EC" id="3.6.1.31"/>
    </reaction>
</comment>
<comment type="catalytic activity">
    <reaction>
        <text>1-(5-phospho-beta-D-ribosyl)-5'-AMP + H2O = 1-(5-phospho-beta-D-ribosyl)-5-[(5-phospho-beta-D-ribosylamino)methylideneamino]imidazole-4-carboxamide</text>
        <dbReference type="Rhea" id="RHEA:20049"/>
        <dbReference type="ChEBI" id="CHEBI:15377"/>
        <dbReference type="ChEBI" id="CHEBI:58435"/>
        <dbReference type="ChEBI" id="CHEBI:59457"/>
        <dbReference type="EC" id="3.5.4.19"/>
    </reaction>
</comment>
<comment type="pathway">
    <text>Amino-acid biosynthesis; L-histidine biosynthesis; L-histidine from 5-phospho-alpha-D-ribose 1-diphosphate: step 2/9.</text>
</comment>
<comment type="pathway">
    <text>Amino-acid biosynthesis; L-histidine biosynthesis; L-histidine from 5-phospho-alpha-D-ribose 1-diphosphate: step 3/9.</text>
</comment>
<comment type="subcellular location">
    <subcellularLocation>
        <location evidence="1">Cytoplasm</location>
    </subcellularLocation>
</comment>
<comment type="similarity">
    <text evidence="2">In the N-terminal section; belongs to the PRA-CH family.</text>
</comment>
<comment type="similarity">
    <text evidence="2">In the C-terminal section; belongs to the PRA-PH family.</text>
</comment>